<proteinExistence type="evidence at protein level"/>
<feature type="chain" id="PRO_0000089067" description="Actin-related protein 2">
    <location>
        <begin position="1"/>
        <end position="394"/>
    </location>
</feature>
<feature type="binding site" evidence="1">
    <location>
        <begin position="160"/>
        <end position="162"/>
    </location>
    <ligand>
        <name>ATP</name>
        <dbReference type="ChEBI" id="CHEBI:30616"/>
    </ligand>
</feature>
<feature type="binding site" evidence="1">
    <location>
        <begin position="214"/>
        <end position="218"/>
    </location>
    <ligand>
        <name>ATP</name>
        <dbReference type="ChEBI" id="CHEBI:30616"/>
    </ligand>
</feature>
<feature type="binding site" evidence="1">
    <location>
        <begin position="305"/>
        <end position="310"/>
    </location>
    <ligand>
        <name>ATP</name>
        <dbReference type="ChEBI" id="CHEBI:30616"/>
    </ligand>
</feature>
<feature type="modified residue" description="N-acetylmethionine" evidence="10">
    <location>
        <position position="1"/>
    </location>
</feature>
<feature type="modified residue" description="N6-acetyllysine" evidence="9">
    <location>
        <position position="299"/>
    </location>
</feature>
<feature type="modified residue" description="N6-acetyllysine" evidence="9">
    <location>
        <position position="322"/>
    </location>
</feature>
<feature type="splice variant" id="VSP_046178" description="In isoform 2." evidence="7">
    <original>K</original>
    <variation>KNNKKM</variation>
    <location>
        <position position="53"/>
    </location>
</feature>
<feature type="sequence conflict" description="In Ref. 6; AAH14546." evidence="8" ref="6">
    <original>M</original>
    <variation>T</variation>
    <location>
        <position position="67"/>
    </location>
</feature>
<feature type="sequence conflict" description="In Ref. 6; AAH14546." evidence="8" ref="6">
    <original>G</original>
    <variation>S</variation>
    <location>
        <position position="172"/>
    </location>
</feature>
<reference key="1">
    <citation type="journal article" date="1997" name="J. Cell Biol.">
        <title>The human Arp2/3 complex is composed of evolutionarily conserved subunits and is localized to cellular regions of dynamic actin filament assembly.</title>
        <authorList>
            <person name="Welch M.D."/>
            <person name="Depace A.H."/>
            <person name="Verma S."/>
            <person name="Iwamatsu A."/>
            <person name="Mitchison T.J."/>
        </authorList>
    </citation>
    <scope>NUCLEOTIDE SEQUENCE [MRNA] (ISOFORM 1)</scope>
</reference>
<reference key="2">
    <citation type="journal article" date="2004" name="Nat. Genet.">
        <title>Complete sequencing and characterization of 21,243 full-length human cDNAs.</title>
        <authorList>
            <person name="Ota T."/>
            <person name="Suzuki Y."/>
            <person name="Nishikawa T."/>
            <person name="Otsuki T."/>
            <person name="Sugiyama T."/>
            <person name="Irie R."/>
            <person name="Wakamatsu A."/>
            <person name="Hayashi K."/>
            <person name="Sato H."/>
            <person name="Nagai K."/>
            <person name="Kimura K."/>
            <person name="Makita H."/>
            <person name="Sekine M."/>
            <person name="Obayashi M."/>
            <person name="Nishi T."/>
            <person name="Shibahara T."/>
            <person name="Tanaka T."/>
            <person name="Ishii S."/>
            <person name="Yamamoto J."/>
            <person name="Saito K."/>
            <person name="Kawai Y."/>
            <person name="Isono Y."/>
            <person name="Nakamura Y."/>
            <person name="Nagahari K."/>
            <person name="Murakami K."/>
            <person name="Yasuda T."/>
            <person name="Iwayanagi T."/>
            <person name="Wagatsuma M."/>
            <person name="Shiratori A."/>
            <person name="Sudo H."/>
            <person name="Hosoiri T."/>
            <person name="Kaku Y."/>
            <person name="Kodaira H."/>
            <person name="Kondo H."/>
            <person name="Sugawara M."/>
            <person name="Takahashi M."/>
            <person name="Kanda K."/>
            <person name="Yokoi T."/>
            <person name="Furuya T."/>
            <person name="Kikkawa E."/>
            <person name="Omura Y."/>
            <person name="Abe K."/>
            <person name="Kamihara K."/>
            <person name="Katsuta N."/>
            <person name="Sato K."/>
            <person name="Tanikawa M."/>
            <person name="Yamazaki M."/>
            <person name="Ninomiya K."/>
            <person name="Ishibashi T."/>
            <person name="Yamashita H."/>
            <person name="Murakawa K."/>
            <person name="Fujimori K."/>
            <person name="Tanai H."/>
            <person name="Kimata M."/>
            <person name="Watanabe M."/>
            <person name="Hiraoka S."/>
            <person name="Chiba Y."/>
            <person name="Ishida S."/>
            <person name="Ono Y."/>
            <person name="Takiguchi S."/>
            <person name="Watanabe S."/>
            <person name="Yosida M."/>
            <person name="Hotuta T."/>
            <person name="Kusano J."/>
            <person name="Kanehori K."/>
            <person name="Takahashi-Fujii A."/>
            <person name="Hara H."/>
            <person name="Tanase T.-O."/>
            <person name="Nomura Y."/>
            <person name="Togiya S."/>
            <person name="Komai F."/>
            <person name="Hara R."/>
            <person name="Takeuchi K."/>
            <person name="Arita M."/>
            <person name="Imose N."/>
            <person name="Musashino K."/>
            <person name="Yuuki H."/>
            <person name="Oshima A."/>
            <person name="Sasaki N."/>
            <person name="Aotsuka S."/>
            <person name="Yoshikawa Y."/>
            <person name="Matsunawa H."/>
            <person name="Ichihara T."/>
            <person name="Shiohata N."/>
            <person name="Sano S."/>
            <person name="Moriya S."/>
            <person name="Momiyama H."/>
            <person name="Satoh N."/>
            <person name="Takami S."/>
            <person name="Terashima Y."/>
            <person name="Suzuki O."/>
            <person name="Nakagawa S."/>
            <person name="Senoh A."/>
            <person name="Mizoguchi H."/>
            <person name="Goto Y."/>
            <person name="Shimizu F."/>
            <person name="Wakebe H."/>
            <person name="Hishigaki H."/>
            <person name="Watanabe T."/>
            <person name="Sugiyama A."/>
            <person name="Takemoto M."/>
            <person name="Kawakami B."/>
            <person name="Yamazaki M."/>
            <person name="Watanabe K."/>
            <person name="Kumagai A."/>
            <person name="Itakura S."/>
            <person name="Fukuzumi Y."/>
            <person name="Fujimori Y."/>
            <person name="Komiyama M."/>
            <person name="Tashiro H."/>
            <person name="Tanigami A."/>
            <person name="Fujiwara T."/>
            <person name="Ono T."/>
            <person name="Yamada K."/>
            <person name="Fujii Y."/>
            <person name="Ozaki K."/>
            <person name="Hirao M."/>
            <person name="Ohmori Y."/>
            <person name="Kawabata A."/>
            <person name="Hikiji T."/>
            <person name="Kobatake N."/>
            <person name="Inagaki H."/>
            <person name="Ikema Y."/>
            <person name="Okamoto S."/>
            <person name="Okitani R."/>
            <person name="Kawakami T."/>
            <person name="Noguchi S."/>
            <person name="Itoh T."/>
            <person name="Shigeta K."/>
            <person name="Senba T."/>
            <person name="Matsumura K."/>
            <person name="Nakajima Y."/>
            <person name="Mizuno T."/>
            <person name="Morinaga M."/>
            <person name="Sasaki M."/>
            <person name="Togashi T."/>
            <person name="Oyama M."/>
            <person name="Hata H."/>
            <person name="Watanabe M."/>
            <person name="Komatsu T."/>
            <person name="Mizushima-Sugano J."/>
            <person name="Satoh T."/>
            <person name="Shirai Y."/>
            <person name="Takahashi Y."/>
            <person name="Nakagawa K."/>
            <person name="Okumura K."/>
            <person name="Nagase T."/>
            <person name="Nomura N."/>
            <person name="Kikuchi H."/>
            <person name="Masuho Y."/>
            <person name="Yamashita R."/>
            <person name="Nakai K."/>
            <person name="Yada T."/>
            <person name="Nakamura Y."/>
            <person name="Ohara O."/>
            <person name="Isogai T."/>
            <person name="Sugano S."/>
        </authorList>
    </citation>
    <scope>NUCLEOTIDE SEQUENCE [LARGE SCALE MRNA] (ISOFORM 1)</scope>
    <source>
        <tissue>Tongue</tissue>
    </source>
</reference>
<reference key="3">
    <citation type="journal article" date="2007" name="BMC Genomics">
        <title>The full-ORF clone resource of the German cDNA consortium.</title>
        <authorList>
            <person name="Bechtel S."/>
            <person name="Rosenfelder H."/>
            <person name="Duda A."/>
            <person name="Schmidt C.P."/>
            <person name="Ernst U."/>
            <person name="Wellenreuther R."/>
            <person name="Mehrle A."/>
            <person name="Schuster C."/>
            <person name="Bahr A."/>
            <person name="Bloecker H."/>
            <person name="Heubner D."/>
            <person name="Hoerlein A."/>
            <person name="Michel G."/>
            <person name="Wedler H."/>
            <person name="Koehrer K."/>
            <person name="Ottenwaelder B."/>
            <person name="Poustka A."/>
            <person name="Wiemann S."/>
            <person name="Schupp I."/>
        </authorList>
    </citation>
    <scope>NUCLEOTIDE SEQUENCE [LARGE SCALE MRNA] (ISOFORM 2)</scope>
    <source>
        <tissue>Liver</tissue>
    </source>
</reference>
<reference key="4">
    <citation type="journal article" date="2005" name="Nature">
        <title>Generation and annotation of the DNA sequences of human chromosomes 2 and 4.</title>
        <authorList>
            <person name="Hillier L.W."/>
            <person name="Graves T.A."/>
            <person name="Fulton R.S."/>
            <person name="Fulton L.A."/>
            <person name="Pepin K.H."/>
            <person name="Minx P."/>
            <person name="Wagner-McPherson C."/>
            <person name="Layman D."/>
            <person name="Wylie K."/>
            <person name="Sekhon M."/>
            <person name="Becker M.C."/>
            <person name="Fewell G.A."/>
            <person name="Delehaunty K.D."/>
            <person name="Miner T.L."/>
            <person name="Nash W.E."/>
            <person name="Kremitzki C."/>
            <person name="Oddy L."/>
            <person name="Du H."/>
            <person name="Sun H."/>
            <person name="Bradshaw-Cordum H."/>
            <person name="Ali J."/>
            <person name="Carter J."/>
            <person name="Cordes M."/>
            <person name="Harris A."/>
            <person name="Isak A."/>
            <person name="van Brunt A."/>
            <person name="Nguyen C."/>
            <person name="Du F."/>
            <person name="Courtney L."/>
            <person name="Kalicki J."/>
            <person name="Ozersky P."/>
            <person name="Abbott S."/>
            <person name="Armstrong J."/>
            <person name="Belter E.A."/>
            <person name="Caruso L."/>
            <person name="Cedroni M."/>
            <person name="Cotton M."/>
            <person name="Davidson T."/>
            <person name="Desai A."/>
            <person name="Elliott G."/>
            <person name="Erb T."/>
            <person name="Fronick C."/>
            <person name="Gaige T."/>
            <person name="Haakenson W."/>
            <person name="Haglund K."/>
            <person name="Holmes A."/>
            <person name="Harkins R."/>
            <person name="Kim K."/>
            <person name="Kruchowski S.S."/>
            <person name="Strong C.M."/>
            <person name="Grewal N."/>
            <person name="Goyea E."/>
            <person name="Hou S."/>
            <person name="Levy A."/>
            <person name="Martinka S."/>
            <person name="Mead K."/>
            <person name="McLellan M.D."/>
            <person name="Meyer R."/>
            <person name="Randall-Maher J."/>
            <person name="Tomlinson C."/>
            <person name="Dauphin-Kohlberg S."/>
            <person name="Kozlowicz-Reilly A."/>
            <person name="Shah N."/>
            <person name="Swearengen-Shahid S."/>
            <person name="Snider J."/>
            <person name="Strong J.T."/>
            <person name="Thompson J."/>
            <person name="Yoakum M."/>
            <person name="Leonard S."/>
            <person name="Pearman C."/>
            <person name="Trani L."/>
            <person name="Radionenko M."/>
            <person name="Waligorski J.E."/>
            <person name="Wang C."/>
            <person name="Rock S.M."/>
            <person name="Tin-Wollam A.-M."/>
            <person name="Maupin R."/>
            <person name="Latreille P."/>
            <person name="Wendl M.C."/>
            <person name="Yang S.-P."/>
            <person name="Pohl C."/>
            <person name="Wallis J.W."/>
            <person name="Spieth J."/>
            <person name="Bieri T.A."/>
            <person name="Berkowicz N."/>
            <person name="Nelson J.O."/>
            <person name="Osborne J."/>
            <person name="Ding L."/>
            <person name="Meyer R."/>
            <person name="Sabo A."/>
            <person name="Shotland Y."/>
            <person name="Sinha P."/>
            <person name="Wohldmann P.E."/>
            <person name="Cook L.L."/>
            <person name="Hickenbotham M.T."/>
            <person name="Eldred J."/>
            <person name="Williams D."/>
            <person name="Jones T.A."/>
            <person name="She X."/>
            <person name="Ciccarelli F.D."/>
            <person name="Izaurralde E."/>
            <person name="Taylor J."/>
            <person name="Schmutz J."/>
            <person name="Myers R.M."/>
            <person name="Cox D.R."/>
            <person name="Huang X."/>
            <person name="McPherson J.D."/>
            <person name="Mardis E.R."/>
            <person name="Clifton S.W."/>
            <person name="Warren W.C."/>
            <person name="Chinwalla A.T."/>
            <person name="Eddy S.R."/>
            <person name="Marra M.A."/>
            <person name="Ovcharenko I."/>
            <person name="Furey T.S."/>
            <person name="Miller W."/>
            <person name="Eichler E.E."/>
            <person name="Bork P."/>
            <person name="Suyama M."/>
            <person name="Torrents D."/>
            <person name="Waterston R.H."/>
            <person name="Wilson R.K."/>
        </authorList>
    </citation>
    <scope>NUCLEOTIDE SEQUENCE [LARGE SCALE GENOMIC DNA]</scope>
</reference>
<reference key="5">
    <citation type="submission" date="2005-09" db="EMBL/GenBank/DDBJ databases">
        <authorList>
            <person name="Mural R.J."/>
            <person name="Istrail S."/>
            <person name="Sutton G.G."/>
            <person name="Florea L."/>
            <person name="Halpern A.L."/>
            <person name="Mobarry C.M."/>
            <person name="Lippert R."/>
            <person name="Walenz B."/>
            <person name="Shatkay H."/>
            <person name="Dew I."/>
            <person name="Miller J.R."/>
            <person name="Flanigan M.J."/>
            <person name="Edwards N.J."/>
            <person name="Bolanos R."/>
            <person name="Fasulo D."/>
            <person name="Halldorsson B.V."/>
            <person name="Hannenhalli S."/>
            <person name="Turner R."/>
            <person name="Yooseph S."/>
            <person name="Lu F."/>
            <person name="Nusskern D.R."/>
            <person name="Shue B.C."/>
            <person name="Zheng X.H."/>
            <person name="Zhong F."/>
            <person name="Delcher A.L."/>
            <person name="Huson D.H."/>
            <person name="Kravitz S.A."/>
            <person name="Mouchard L."/>
            <person name="Reinert K."/>
            <person name="Remington K.A."/>
            <person name="Clark A.G."/>
            <person name="Waterman M.S."/>
            <person name="Eichler E.E."/>
            <person name="Adams M.D."/>
            <person name="Hunkapiller M.W."/>
            <person name="Myers E.W."/>
            <person name="Venter J.C."/>
        </authorList>
    </citation>
    <scope>NUCLEOTIDE SEQUENCE [LARGE SCALE GENOMIC DNA]</scope>
</reference>
<reference key="6">
    <citation type="journal article" date="2004" name="Genome Res.">
        <title>The status, quality, and expansion of the NIH full-length cDNA project: the Mammalian Gene Collection (MGC).</title>
        <authorList>
            <consortium name="The MGC Project Team"/>
        </authorList>
    </citation>
    <scope>NUCLEOTIDE SEQUENCE [LARGE SCALE MRNA] (ISOFORM 1)</scope>
    <source>
        <tissue>Skeletal muscle</tissue>
    </source>
</reference>
<reference key="7">
    <citation type="journal article" date="1997" name="Nature">
        <title>Actin polymerization is induced by Arp2/3 protein complex at the surface of Listeria monocytogenes.</title>
        <authorList>
            <person name="Welch M.D."/>
            <person name="Iwamatsu A."/>
            <person name="Mitchison T.J."/>
        </authorList>
    </citation>
    <scope>PARTIAL PROTEIN SEQUENCE</scope>
    <scope>FUNCTION OF THE ARP2/3 COMPLEX</scope>
    <scope>IDENTIFICATION IN THE ARP2/3 COMPLEX</scope>
    <scope>SUBCELLULAR LOCATION</scope>
</reference>
<reference key="8">
    <citation type="journal article" date="2001" name="Mol. Cell">
        <title>Reconstitution of human Arp2/3 complex reveals critical roles of individual subunits in complex structure and activity.</title>
        <authorList>
            <person name="Gournier H."/>
            <person name="Goley E.D."/>
            <person name="Niederstrasser H."/>
            <person name="Trinh T."/>
            <person name="Welch M.D."/>
        </authorList>
    </citation>
    <scope>RECONSTITUTION OF THE ARP2/3 COMPLEX</scope>
</reference>
<reference key="9">
    <citation type="journal article" date="2007" name="J. Biol. Chem.">
        <title>A novel role of the actin-nucleating Arp2/3 complex in the regulation of RNA polymerase II-dependent transcription.</title>
        <authorList>
            <person name="Yoo Y."/>
            <person name="Wu X."/>
            <person name="Guan J.L."/>
        </authorList>
    </citation>
    <scope>FUNCTION</scope>
    <scope>SUBCELLULAR LOCATION</scope>
</reference>
<reference key="10">
    <citation type="journal article" date="2009" name="Science">
        <title>Lysine acetylation targets protein complexes and co-regulates major cellular functions.</title>
        <authorList>
            <person name="Choudhary C."/>
            <person name="Kumar C."/>
            <person name="Gnad F."/>
            <person name="Nielsen M.L."/>
            <person name="Rehman M."/>
            <person name="Walther T.C."/>
            <person name="Olsen J.V."/>
            <person name="Mann M."/>
        </authorList>
    </citation>
    <scope>ACETYLATION [LARGE SCALE ANALYSIS] AT LYS-299 AND LYS-322</scope>
    <scope>IDENTIFICATION BY MASS SPECTROMETRY [LARGE SCALE ANALYSIS]</scope>
</reference>
<reference key="11">
    <citation type="journal article" date="2011" name="BMC Syst. Biol.">
        <title>Initial characterization of the human central proteome.</title>
        <authorList>
            <person name="Burkard T.R."/>
            <person name="Planyavsky M."/>
            <person name="Kaupe I."/>
            <person name="Breitwieser F.P."/>
            <person name="Buerckstuemmer T."/>
            <person name="Bennett K.L."/>
            <person name="Superti-Furga G."/>
            <person name="Colinge J."/>
        </authorList>
    </citation>
    <scope>IDENTIFICATION BY MASS SPECTROMETRY [LARGE SCALE ANALYSIS]</scope>
</reference>
<reference key="12">
    <citation type="journal article" date="2014" name="J. Proteomics">
        <title>An enzyme assisted RP-RPLC approach for in-depth analysis of human liver phosphoproteome.</title>
        <authorList>
            <person name="Bian Y."/>
            <person name="Song C."/>
            <person name="Cheng K."/>
            <person name="Dong M."/>
            <person name="Wang F."/>
            <person name="Huang J."/>
            <person name="Sun D."/>
            <person name="Wang L."/>
            <person name="Ye M."/>
            <person name="Zou H."/>
        </authorList>
    </citation>
    <scope>IDENTIFICATION BY MASS SPECTROMETRY [LARGE SCALE ANALYSIS]</scope>
    <source>
        <tissue>Liver</tissue>
    </source>
</reference>
<reference key="13">
    <citation type="journal article" date="2015" name="Proteomics">
        <title>N-terminome analysis of the human mitochondrial proteome.</title>
        <authorList>
            <person name="Vaca Jacome A.S."/>
            <person name="Rabilloud T."/>
            <person name="Schaeffer-Reiss C."/>
            <person name="Rompais M."/>
            <person name="Ayoub D."/>
            <person name="Lane L."/>
            <person name="Bairoch A."/>
            <person name="Van Dorsselaer A."/>
            <person name="Carapito C."/>
        </authorList>
    </citation>
    <scope>ACETYLATION [LARGE SCALE ANALYSIS] AT MET-1</scope>
    <scope>IDENTIFICATION BY MASS SPECTROMETRY [LARGE SCALE ANALYSIS]</scope>
</reference>
<reference key="14">
    <citation type="journal article" date="2017" name="J. Clin. Invest.">
        <title>Advillin acts upstream of phospholipase C 1 in steroid-resistant nephrotic syndrome.</title>
        <authorList>
            <person name="Rao J."/>
            <person name="Ashraf S."/>
            <person name="Tan W."/>
            <person name="van der Ven A.T."/>
            <person name="Gee H.Y."/>
            <person name="Braun D.A."/>
            <person name="Feher K."/>
            <person name="George S.P."/>
            <person name="Esmaeilniakooshkghazi A."/>
            <person name="Choi W.I."/>
            <person name="Jobst-Schwan T."/>
            <person name="Schneider R."/>
            <person name="Schmidt J.M."/>
            <person name="Widmeier E."/>
            <person name="Warejko J.K."/>
            <person name="Hermle T."/>
            <person name="Schapiro D."/>
            <person name="Lovric S."/>
            <person name="Shril S."/>
            <person name="Daga A."/>
            <person name="Nayir A."/>
            <person name="Shenoy M."/>
            <person name="Tse Y."/>
            <person name="Bald M."/>
            <person name="Helmchen U."/>
            <person name="Mir S."/>
            <person name="Berdeli A."/>
            <person name="Kari J.A."/>
            <person name="El Desoky S."/>
            <person name="Soliman N.A."/>
            <person name="Bagga A."/>
            <person name="Mane S."/>
            <person name="Jairajpuri M.A."/>
            <person name="Lifton R.P."/>
            <person name="Khurana S."/>
            <person name="Martins J.C."/>
            <person name="Hildebrandt F."/>
        </authorList>
    </citation>
    <scope>FUNCTION</scope>
    <scope>INTERACTION WITH AVIL</scope>
</reference>
<reference key="15">
    <citation type="journal article" date="2018" name="Nature">
        <title>Nuclear ARP2/3 drives DNA break clustering for homology-directed repair.</title>
        <authorList>
            <person name="Schrank B.R."/>
            <person name="Aparicio T."/>
            <person name="Li Y."/>
            <person name="Chang W."/>
            <person name="Chait B.T."/>
            <person name="Gundersen G.G."/>
            <person name="Gottesman M.E."/>
            <person name="Gautier J."/>
        </authorList>
    </citation>
    <scope>FUNCTION</scope>
    <scope>SUBCELLULAR LOCATION</scope>
</reference>
<dbReference type="EMBL" id="AF006082">
    <property type="protein sequence ID" value="AAB64187.1"/>
    <property type="molecule type" value="mRNA"/>
</dbReference>
<dbReference type="EMBL" id="AK315205">
    <property type="protein sequence ID" value="BAG37642.1"/>
    <property type="molecule type" value="mRNA"/>
</dbReference>
<dbReference type="EMBL" id="BX649080">
    <property type="status" value="NOT_ANNOTATED_CDS"/>
    <property type="molecule type" value="mRNA"/>
</dbReference>
<dbReference type="EMBL" id="AC007318">
    <property type="status" value="NOT_ANNOTATED_CDS"/>
    <property type="molecule type" value="Genomic_DNA"/>
</dbReference>
<dbReference type="EMBL" id="CH471053">
    <property type="protein sequence ID" value="EAW99908.1"/>
    <property type="molecule type" value="Genomic_DNA"/>
</dbReference>
<dbReference type="EMBL" id="CH471053">
    <property type="protein sequence ID" value="EAW99910.1"/>
    <property type="molecule type" value="Genomic_DNA"/>
</dbReference>
<dbReference type="EMBL" id="CH471053">
    <property type="protein sequence ID" value="EAW99912.1"/>
    <property type="molecule type" value="Genomic_DNA"/>
</dbReference>
<dbReference type="EMBL" id="CH471053">
    <property type="protein sequence ID" value="EAW99913.1"/>
    <property type="molecule type" value="Genomic_DNA"/>
</dbReference>
<dbReference type="EMBL" id="BC014546">
    <property type="protein sequence ID" value="AAH14546.1"/>
    <property type="molecule type" value="mRNA"/>
</dbReference>
<dbReference type="CCDS" id="CCDS1881.1">
    <molecule id="P61160-1"/>
</dbReference>
<dbReference type="CCDS" id="CCDS46307.1">
    <molecule id="P61160-2"/>
</dbReference>
<dbReference type="RefSeq" id="NP_001005386.1">
    <molecule id="P61160-2"/>
    <property type="nucleotide sequence ID" value="NM_001005386.3"/>
</dbReference>
<dbReference type="RefSeq" id="NP_005713.1">
    <molecule id="P61160-1"/>
    <property type="nucleotide sequence ID" value="NM_005722.4"/>
</dbReference>
<dbReference type="PDB" id="6UHC">
    <property type="method" value="EM"/>
    <property type="resolution" value="3.90 A"/>
    <property type="chains" value="B=1-394"/>
</dbReference>
<dbReference type="PDB" id="6YW6">
    <property type="method" value="EM"/>
    <property type="resolution" value="4.20 A"/>
    <property type="chains" value="B=1-394"/>
</dbReference>
<dbReference type="PDB" id="6YW7">
    <property type="method" value="EM"/>
    <property type="resolution" value="4.50 A"/>
    <property type="chains" value="B=1-394"/>
</dbReference>
<dbReference type="PDB" id="8P94">
    <property type="method" value="EM"/>
    <property type="resolution" value="3.30 A"/>
    <property type="chains" value="B=1-394"/>
</dbReference>
<dbReference type="PDBsum" id="6UHC"/>
<dbReference type="PDBsum" id="6YW6"/>
<dbReference type="PDBsum" id="6YW7"/>
<dbReference type="PDBsum" id="8P94"/>
<dbReference type="EMDB" id="EMD-10959"/>
<dbReference type="EMDB" id="EMD-10960"/>
<dbReference type="EMDB" id="EMD-17558"/>
<dbReference type="EMDB" id="EMD-20770"/>
<dbReference type="SMR" id="P61160"/>
<dbReference type="BioGRID" id="115404">
    <property type="interactions" value="333"/>
</dbReference>
<dbReference type="ComplexPortal" id="CPX-2490">
    <property type="entry name" value="Actin-related protein 2/3 complex, ARPC1A-ACTR3B-ARPC5 variant"/>
</dbReference>
<dbReference type="ComplexPortal" id="CPX-2579">
    <property type="entry name" value="Actin-related protein 2/3 complex, ARPC1B-ACTR3-ARPC5 variant"/>
</dbReference>
<dbReference type="ComplexPortal" id="CPX-2580">
    <property type="entry name" value="Actin-related protein 2/3 complex, ARPC1B-ACTR3B-ARPC5L variant"/>
</dbReference>
<dbReference type="ComplexPortal" id="CPX-2583">
    <property type="entry name" value="Actin-related protein 2/3 complex, ARPC1B-ACTR3B-ARPC5 variant"/>
</dbReference>
<dbReference type="ComplexPortal" id="CPX-2586">
    <property type="entry name" value="Actin-related protein 2/3 complex, ARPC1A-ACTR3-ARPC5 variant"/>
</dbReference>
<dbReference type="ComplexPortal" id="CPX-2592">
    <property type="entry name" value="Actin-related protein 2/3 complex, ARPC1A-ACTR3-ARPC5L variant"/>
</dbReference>
<dbReference type="ComplexPortal" id="CPX-2663">
    <property type="entry name" value="Actin-related protein 2/3 complex, ARPC1B-ACTR3-ARPC5L variant"/>
</dbReference>
<dbReference type="ComplexPortal" id="CPX-2668">
    <property type="entry name" value="Actin-related protein 2/3 complex, ARPC1B-ACTR3B-ARPC5L variant"/>
</dbReference>
<dbReference type="CORUM" id="P61160"/>
<dbReference type="DIP" id="DIP-33165N"/>
<dbReference type="FunCoup" id="P61160">
    <property type="interactions" value="3408"/>
</dbReference>
<dbReference type="IntAct" id="P61160">
    <property type="interactions" value="180"/>
</dbReference>
<dbReference type="MINT" id="P61160"/>
<dbReference type="STRING" id="9606.ENSP00000367220"/>
<dbReference type="BindingDB" id="P61160"/>
<dbReference type="ChEMBL" id="CHEMBL6090"/>
<dbReference type="DrugBank" id="DB08236">
    <property type="generic name" value="(2S)-2-(3-bromophenyl)-3-(5-chloro-2-hydroxyphenyl)-1,3-thiazolidin-4-one"/>
</dbReference>
<dbReference type="DrugBank" id="DB08235">
    <property type="generic name" value="N-[2-(2-methyl-1H-indol-3-yl)ethyl]thiophene-2-carboxamide"/>
</dbReference>
<dbReference type="GlyGen" id="P61160">
    <property type="glycosylation" value="5 sites, 1 N-linked glycan (2 sites), 1 O-linked glycan (3 sites)"/>
</dbReference>
<dbReference type="iPTMnet" id="P61160"/>
<dbReference type="MetOSite" id="P61160"/>
<dbReference type="PhosphoSitePlus" id="P61160"/>
<dbReference type="SwissPalm" id="P61160"/>
<dbReference type="BioMuta" id="ACTR2"/>
<dbReference type="DMDM" id="47117648"/>
<dbReference type="jPOST" id="P61160"/>
<dbReference type="MassIVE" id="P61160"/>
<dbReference type="PaxDb" id="9606-ENSP00000367220"/>
<dbReference type="PeptideAtlas" id="P61160"/>
<dbReference type="PRIDE" id="P61160"/>
<dbReference type="ProteomicsDB" id="20021"/>
<dbReference type="ProteomicsDB" id="57269">
    <molecule id="P61160-1"/>
</dbReference>
<dbReference type="Pumba" id="P61160"/>
<dbReference type="Antibodypedia" id="3912">
    <property type="antibodies" value="298 antibodies from 37 providers"/>
</dbReference>
<dbReference type="DNASU" id="10097"/>
<dbReference type="Ensembl" id="ENST00000260641.10">
    <molecule id="P61160-1"/>
    <property type="protein sequence ID" value="ENSP00000260641.5"/>
    <property type="gene ID" value="ENSG00000138071.15"/>
</dbReference>
<dbReference type="Ensembl" id="ENST00000377982.8">
    <molecule id="P61160-2"/>
    <property type="protein sequence ID" value="ENSP00000367220.4"/>
    <property type="gene ID" value="ENSG00000138071.15"/>
</dbReference>
<dbReference type="GeneID" id="10097"/>
<dbReference type="KEGG" id="hsa:10097"/>
<dbReference type="MANE-Select" id="ENST00000260641.10">
    <property type="protein sequence ID" value="ENSP00000260641.5"/>
    <property type="RefSeq nucleotide sequence ID" value="NM_005722.4"/>
    <property type="RefSeq protein sequence ID" value="NP_005713.1"/>
</dbReference>
<dbReference type="UCSC" id="uc002sdp.4">
    <molecule id="P61160-1"/>
    <property type="organism name" value="human"/>
</dbReference>
<dbReference type="AGR" id="HGNC:169"/>
<dbReference type="CTD" id="10097"/>
<dbReference type="DisGeNET" id="10097"/>
<dbReference type="GeneCards" id="ACTR2"/>
<dbReference type="HGNC" id="HGNC:169">
    <property type="gene designation" value="ACTR2"/>
</dbReference>
<dbReference type="HPA" id="ENSG00000138071">
    <property type="expression patterns" value="Low tissue specificity"/>
</dbReference>
<dbReference type="MIM" id="604221">
    <property type="type" value="gene"/>
</dbReference>
<dbReference type="neXtProt" id="NX_P61160"/>
<dbReference type="OpenTargets" id="ENSG00000138071"/>
<dbReference type="PharmGKB" id="PA24488"/>
<dbReference type="VEuPathDB" id="HostDB:ENSG00000138071"/>
<dbReference type="eggNOG" id="KOG0677">
    <property type="taxonomic scope" value="Eukaryota"/>
</dbReference>
<dbReference type="GeneTree" id="ENSGT00940000154556"/>
<dbReference type="InParanoid" id="P61160"/>
<dbReference type="OMA" id="WEDMQHL"/>
<dbReference type="OrthoDB" id="10251209at2759"/>
<dbReference type="PAN-GO" id="P61160">
    <property type="GO annotations" value="4 GO annotations based on evolutionary models"/>
</dbReference>
<dbReference type="PhylomeDB" id="P61160"/>
<dbReference type="TreeFam" id="TF300467"/>
<dbReference type="PathwayCommons" id="P61160"/>
<dbReference type="Reactome" id="R-HSA-2029482">
    <property type="pathway name" value="Regulation of actin dynamics for phagocytic cup formation"/>
</dbReference>
<dbReference type="Reactome" id="R-HSA-3928662">
    <property type="pathway name" value="EPHB-mediated forward signaling"/>
</dbReference>
<dbReference type="Reactome" id="R-HSA-5663213">
    <property type="pathway name" value="RHO GTPases Activate WASPs and WAVEs"/>
</dbReference>
<dbReference type="Reactome" id="R-HSA-6798695">
    <property type="pathway name" value="Neutrophil degranulation"/>
</dbReference>
<dbReference type="Reactome" id="R-HSA-8856828">
    <property type="pathway name" value="Clathrin-mediated endocytosis"/>
</dbReference>
<dbReference type="Reactome" id="R-HSA-9664422">
    <property type="pathway name" value="FCGR3A-mediated phagocytosis"/>
</dbReference>
<dbReference type="SignaLink" id="P61160"/>
<dbReference type="SIGNOR" id="P61160"/>
<dbReference type="BioGRID-ORCS" id="10097">
    <property type="hits" value="794 hits in 1109 CRISPR screens"/>
</dbReference>
<dbReference type="CD-CODE" id="91857CE7">
    <property type="entry name" value="Nucleolus"/>
</dbReference>
<dbReference type="ChiTaRS" id="ACTR2">
    <property type="organism name" value="human"/>
</dbReference>
<dbReference type="GeneWiki" id="ACTR2"/>
<dbReference type="GenomeRNAi" id="10097"/>
<dbReference type="Pharos" id="P61160">
    <property type="development level" value="Tchem"/>
</dbReference>
<dbReference type="PRO" id="PR:P61160"/>
<dbReference type="Proteomes" id="UP000005640">
    <property type="component" value="Chromosome 2"/>
</dbReference>
<dbReference type="RNAct" id="P61160">
    <property type="molecule type" value="protein"/>
</dbReference>
<dbReference type="Bgee" id="ENSG00000138071">
    <property type="expression patterns" value="Expressed in monocyte and 216 other cell types or tissues"/>
</dbReference>
<dbReference type="ExpressionAtlas" id="P61160">
    <property type="expression patterns" value="baseline and differential"/>
</dbReference>
<dbReference type="GO" id="GO:0030478">
    <property type="term" value="C:actin cap"/>
    <property type="evidence" value="ECO:0007669"/>
    <property type="project" value="Ensembl"/>
</dbReference>
<dbReference type="GO" id="GO:0015629">
    <property type="term" value="C:actin cytoskeleton"/>
    <property type="evidence" value="ECO:0000304"/>
    <property type="project" value="UniProtKB"/>
</dbReference>
<dbReference type="GO" id="GO:0005885">
    <property type="term" value="C:Arp2/3 protein complex"/>
    <property type="evidence" value="ECO:0000314"/>
    <property type="project" value="UniProtKB"/>
</dbReference>
<dbReference type="GO" id="GO:0035578">
    <property type="term" value="C:azurophil granule lumen"/>
    <property type="evidence" value="ECO:0000304"/>
    <property type="project" value="Reactome"/>
</dbReference>
<dbReference type="GO" id="GO:0005938">
    <property type="term" value="C:cell cortex"/>
    <property type="evidence" value="ECO:0000318"/>
    <property type="project" value="GO_Central"/>
</dbReference>
<dbReference type="GO" id="GO:0042995">
    <property type="term" value="C:cell projection"/>
    <property type="evidence" value="ECO:0007669"/>
    <property type="project" value="UniProtKB-SubCell"/>
</dbReference>
<dbReference type="GO" id="GO:0005737">
    <property type="term" value="C:cytoplasm"/>
    <property type="evidence" value="ECO:0000314"/>
    <property type="project" value="UniProtKB"/>
</dbReference>
<dbReference type="GO" id="GO:0005829">
    <property type="term" value="C:cytosol"/>
    <property type="evidence" value="ECO:0000304"/>
    <property type="project" value="Reactome"/>
</dbReference>
<dbReference type="GO" id="GO:0070062">
    <property type="term" value="C:extracellular exosome"/>
    <property type="evidence" value="ECO:0007005"/>
    <property type="project" value="UniProtKB"/>
</dbReference>
<dbReference type="GO" id="GO:0005576">
    <property type="term" value="C:extracellular region"/>
    <property type="evidence" value="ECO:0000304"/>
    <property type="project" value="Reactome"/>
</dbReference>
<dbReference type="GO" id="GO:1904813">
    <property type="term" value="C:ficolin-1-rich granule lumen"/>
    <property type="evidence" value="ECO:0000304"/>
    <property type="project" value="Reactome"/>
</dbReference>
<dbReference type="GO" id="GO:0005925">
    <property type="term" value="C:focal adhesion"/>
    <property type="evidence" value="ECO:0007005"/>
    <property type="project" value="UniProtKB"/>
</dbReference>
<dbReference type="GO" id="GO:0016020">
    <property type="term" value="C:membrane"/>
    <property type="evidence" value="ECO:0007005"/>
    <property type="project" value="UniProtKB"/>
</dbReference>
<dbReference type="GO" id="GO:0005634">
    <property type="term" value="C:nucleus"/>
    <property type="evidence" value="ECO:0000314"/>
    <property type="project" value="UniProtKB"/>
</dbReference>
<dbReference type="GO" id="GO:0035861">
    <property type="term" value="C:site of double-strand break"/>
    <property type="evidence" value="ECO:0000314"/>
    <property type="project" value="UniProtKB"/>
</dbReference>
<dbReference type="GO" id="GO:0003779">
    <property type="term" value="F:actin binding"/>
    <property type="evidence" value="ECO:0007669"/>
    <property type="project" value="UniProtKB-KW"/>
</dbReference>
<dbReference type="GO" id="GO:0005524">
    <property type="term" value="F:ATP binding"/>
    <property type="evidence" value="ECO:0007669"/>
    <property type="project" value="UniProtKB-KW"/>
</dbReference>
<dbReference type="GO" id="GO:0005200">
    <property type="term" value="F:structural constituent of cytoskeleton"/>
    <property type="evidence" value="ECO:0000314"/>
    <property type="project" value="FlyBase"/>
</dbReference>
<dbReference type="GO" id="GO:0034314">
    <property type="term" value="P:Arp2/3 complex-mediated actin nucleation"/>
    <property type="evidence" value="ECO:0000314"/>
    <property type="project" value="UniProtKB"/>
</dbReference>
<dbReference type="GO" id="GO:0008356">
    <property type="term" value="P:asymmetric cell division"/>
    <property type="evidence" value="ECO:0007669"/>
    <property type="project" value="Ensembl"/>
</dbReference>
<dbReference type="GO" id="GO:0071346">
    <property type="term" value="P:cellular response to type II interferon"/>
    <property type="evidence" value="ECO:0007669"/>
    <property type="project" value="Ensembl"/>
</dbReference>
<dbReference type="GO" id="GO:0060271">
    <property type="term" value="P:cilium assembly"/>
    <property type="evidence" value="ECO:0000315"/>
    <property type="project" value="MGI"/>
</dbReference>
<dbReference type="GO" id="GO:0016482">
    <property type="term" value="P:cytosolic transport"/>
    <property type="evidence" value="ECO:0007669"/>
    <property type="project" value="Ensembl"/>
</dbReference>
<dbReference type="GO" id="GO:0007163">
    <property type="term" value="P:establishment or maintenance of cell polarity"/>
    <property type="evidence" value="ECO:0007669"/>
    <property type="project" value="Ensembl"/>
</dbReference>
<dbReference type="GO" id="GO:0016344">
    <property type="term" value="P:meiotic chromosome movement towards spindle pole"/>
    <property type="evidence" value="ECO:0007669"/>
    <property type="project" value="Ensembl"/>
</dbReference>
<dbReference type="GO" id="GO:0033206">
    <property type="term" value="P:meiotic cytokinesis"/>
    <property type="evidence" value="ECO:0007669"/>
    <property type="project" value="Ensembl"/>
</dbReference>
<dbReference type="GO" id="GO:1905168">
    <property type="term" value="P:positive regulation of double-strand break repair via homologous recombination"/>
    <property type="evidence" value="ECO:0000314"/>
    <property type="project" value="UniProtKB"/>
</dbReference>
<dbReference type="GO" id="GO:0010592">
    <property type="term" value="P:positive regulation of lamellipodium assembly"/>
    <property type="evidence" value="ECO:0000314"/>
    <property type="project" value="UniProtKB"/>
</dbReference>
<dbReference type="GO" id="GO:0045944">
    <property type="term" value="P:positive regulation of transcription by RNA polymerase II"/>
    <property type="evidence" value="ECO:0000314"/>
    <property type="project" value="UniProtKB"/>
</dbReference>
<dbReference type="GO" id="GO:0051653">
    <property type="term" value="P:spindle localization"/>
    <property type="evidence" value="ECO:0007669"/>
    <property type="project" value="Ensembl"/>
</dbReference>
<dbReference type="CDD" id="cd10220">
    <property type="entry name" value="ASKHA_NBD_Arp2"/>
    <property type="match status" value="1"/>
</dbReference>
<dbReference type="FunFam" id="3.30.420.40:FF:000538">
    <property type="entry name" value="Actin-related protein 2"/>
    <property type="match status" value="1"/>
</dbReference>
<dbReference type="FunFam" id="3.90.640.10:FF:000005">
    <property type="entry name" value="Actin-related protein 2"/>
    <property type="match status" value="1"/>
</dbReference>
<dbReference type="Gene3D" id="3.30.420.40">
    <property type="match status" value="2"/>
</dbReference>
<dbReference type="Gene3D" id="3.90.640.10">
    <property type="entry name" value="Actin, Chain A, domain 4"/>
    <property type="match status" value="1"/>
</dbReference>
<dbReference type="InterPro" id="IPR004000">
    <property type="entry name" value="Actin"/>
</dbReference>
<dbReference type="InterPro" id="IPR020902">
    <property type="entry name" value="Actin/actin-like_CS"/>
</dbReference>
<dbReference type="InterPro" id="IPR043129">
    <property type="entry name" value="ATPase_NBD"/>
</dbReference>
<dbReference type="PANTHER" id="PTHR11937">
    <property type="entry name" value="ACTIN"/>
    <property type="match status" value="1"/>
</dbReference>
<dbReference type="Pfam" id="PF00022">
    <property type="entry name" value="Actin"/>
    <property type="match status" value="1"/>
</dbReference>
<dbReference type="PRINTS" id="PR00190">
    <property type="entry name" value="ACTIN"/>
</dbReference>
<dbReference type="SMART" id="SM00268">
    <property type="entry name" value="ACTIN"/>
    <property type="match status" value="1"/>
</dbReference>
<dbReference type="SUPFAM" id="SSF53067">
    <property type="entry name" value="Actin-like ATPase domain"/>
    <property type="match status" value="2"/>
</dbReference>
<dbReference type="PROSITE" id="PS01132">
    <property type="entry name" value="ACTINS_ACT_LIKE"/>
    <property type="match status" value="1"/>
</dbReference>
<protein>
    <recommendedName>
        <fullName>Actin-related protein 2</fullName>
    </recommendedName>
    <alternativeName>
        <fullName>Actin-like protein 2</fullName>
    </alternativeName>
</protein>
<sequence>MDSQGRKVVVCDNGTGFVKCGYAGSNFPEHIFPALVGRPIIRSTTKVGNIEIKDLMVGDEASELRSMLEVNYPMENGIVRNWDDMKHLWDYTFGPEKLNIDTRNCKILLTEPPMNPTKNREKIVEVMFETYQFSGVYVAIQAVLTLYAQGLLTGVVVDSGDGVTHICPVYEGFSLPHLTRRLDIAGRDITRYLIKLLLLRGYAFNHSADFETVRMIKEKLCYVGYNIEQEQKLALETTVLVESYTLPDGRIIKVGGERFEAPEALFQPHLINVEGVGVAELLFNTIQAADIDTRSEFYKHIVLSGGSTMYPGLPSRLERELKQLYLERVLKGDVEKLSKFKIRIEDPPRRKHMVFLGGAVLADIMKDKDNFWMTRQEYQEKGVRVLEKLGVTVR</sequence>
<evidence type="ECO:0000250" key="1">
    <source>
        <dbReference type="UniProtKB" id="A7MB62"/>
    </source>
</evidence>
<evidence type="ECO:0000269" key="2">
    <source>
    </source>
</evidence>
<evidence type="ECO:0000269" key="3">
    <source>
    </source>
</evidence>
<evidence type="ECO:0000269" key="4">
    <source>
    </source>
</evidence>
<evidence type="ECO:0000269" key="5">
    <source>
    </source>
</evidence>
<evidence type="ECO:0000269" key="6">
    <source>
    </source>
</evidence>
<evidence type="ECO:0000303" key="7">
    <source>
    </source>
</evidence>
<evidence type="ECO:0000305" key="8"/>
<evidence type="ECO:0007744" key="9">
    <source>
    </source>
</evidence>
<evidence type="ECO:0007744" key="10">
    <source>
    </source>
</evidence>
<comment type="function">
    <text evidence="3 4 5 6">ATP-binding component of the Arp2/3 complex, a multiprotein complex that mediates actin polymerization upon stimulation by nucleation-promoting factor (NPF) (PubMed:9000076). The Arp2/3 complex mediates the formation of branched actin networks in the cytoplasm, providing the force for cell motility (PubMed:9000076). Seems to contact the pointed end of the daughter actin filament (PubMed:9000076). In podocytes, required for the formation of lamellipodia downstream of AVIL and PLCE1 regulation (PubMed:29058690). In addition to its role in the cytoplasmic cytoskeleton, the Arp2/3 complex also promotes actin polymerization in the nucleus, thereby regulating gene transcription and repair of damaged DNA (PubMed:17220302, PubMed:29925947). The Arp2/3 complex promotes homologous recombination (HR) repair in response to DNA damage by promoting nuclear actin polymerization, leading to drive motility of double-strand breaks (DSBs) (PubMed:29925947).</text>
</comment>
<comment type="subunit">
    <text evidence="2 4 6">Component of the Arp2/3 complex composed of ACTR2/ARP2, ACTR3/ARP3, ARPC1B/p41-ARC, ARPC2/p34-ARC, ARPC3/p21-ARC, ARPC4/p20-ARC and ARPC5/p16-ARC. Interacts with AVIL (PubMed:29058690).</text>
</comment>
<comment type="subcellular location">
    <subcellularLocation>
        <location evidence="6">Cytoplasm</location>
        <location evidence="6">Cytoskeleton</location>
    </subcellularLocation>
    <subcellularLocation>
        <location evidence="6">Cell projection</location>
    </subcellularLocation>
    <subcellularLocation>
        <location evidence="3 5">Nucleus</location>
    </subcellularLocation>
</comment>
<comment type="alternative products">
    <event type="alternative splicing"/>
    <isoform>
        <id>P61160-1</id>
        <name>1</name>
        <sequence type="displayed"/>
    </isoform>
    <isoform>
        <id>P61160-2</id>
        <name>2</name>
        <sequence type="described" ref="VSP_046178"/>
    </isoform>
</comment>
<comment type="similarity">
    <text evidence="8">Belongs to the actin family. ARP2 subfamily.</text>
</comment>
<comment type="online information" name="Protein Spotlight">
    <link uri="https://www.proteinspotlight.org/back_issues/208/"/>
    <text>On mar and motion - Issue 208 of November 2018</text>
</comment>
<keyword id="KW-0002">3D-structure</keyword>
<keyword id="KW-0007">Acetylation</keyword>
<keyword id="KW-0009">Actin-binding</keyword>
<keyword id="KW-0025">Alternative splicing</keyword>
<keyword id="KW-0067">ATP-binding</keyword>
<keyword id="KW-0966">Cell projection</keyword>
<keyword id="KW-0963">Cytoplasm</keyword>
<keyword id="KW-0206">Cytoskeleton</keyword>
<keyword id="KW-0903">Direct protein sequencing</keyword>
<keyword id="KW-0547">Nucleotide-binding</keyword>
<keyword id="KW-0539">Nucleus</keyword>
<keyword id="KW-1267">Proteomics identification</keyword>
<keyword id="KW-1185">Reference proteome</keyword>
<name>ARP2_HUMAN</name>
<organism>
    <name type="scientific">Homo sapiens</name>
    <name type="common">Human</name>
    <dbReference type="NCBI Taxonomy" id="9606"/>
    <lineage>
        <taxon>Eukaryota</taxon>
        <taxon>Metazoa</taxon>
        <taxon>Chordata</taxon>
        <taxon>Craniata</taxon>
        <taxon>Vertebrata</taxon>
        <taxon>Euteleostomi</taxon>
        <taxon>Mammalia</taxon>
        <taxon>Eutheria</taxon>
        <taxon>Euarchontoglires</taxon>
        <taxon>Primates</taxon>
        <taxon>Haplorrhini</taxon>
        <taxon>Catarrhini</taxon>
        <taxon>Hominidae</taxon>
        <taxon>Homo</taxon>
    </lineage>
</organism>
<gene>
    <name type="primary">ACTR2</name>
    <name type="synonym">ARP2</name>
</gene>
<accession>P61160</accession>
<accession>B2RCP5</accession>
<accession>D6W5F4</accession>
<accession>E9PF41</accession>
<accession>O15142</accession>
<accession>Q96C82</accession>